<dbReference type="EC" id="1.6.1.1" evidence="1"/>
<dbReference type="EMBL" id="CP000744">
    <property type="protein sequence ID" value="ABR81099.1"/>
    <property type="molecule type" value="Genomic_DNA"/>
</dbReference>
<dbReference type="RefSeq" id="WP_003156864.1">
    <property type="nucleotide sequence ID" value="NC_009656.1"/>
</dbReference>
<dbReference type="SMR" id="A6V3A6"/>
<dbReference type="GeneID" id="77220517"/>
<dbReference type="KEGG" id="pap:PSPA7_2169"/>
<dbReference type="HOGENOM" id="CLU_016755_0_0_6"/>
<dbReference type="Proteomes" id="UP000001582">
    <property type="component" value="Chromosome"/>
</dbReference>
<dbReference type="GO" id="GO:0005829">
    <property type="term" value="C:cytosol"/>
    <property type="evidence" value="ECO:0007669"/>
    <property type="project" value="TreeGrafter"/>
</dbReference>
<dbReference type="GO" id="GO:0004148">
    <property type="term" value="F:dihydrolipoyl dehydrogenase (NADH) activity"/>
    <property type="evidence" value="ECO:0007669"/>
    <property type="project" value="TreeGrafter"/>
</dbReference>
<dbReference type="GO" id="GO:0050660">
    <property type="term" value="F:flavin adenine dinucleotide binding"/>
    <property type="evidence" value="ECO:0007669"/>
    <property type="project" value="TreeGrafter"/>
</dbReference>
<dbReference type="GO" id="GO:0003957">
    <property type="term" value="F:NAD(P)+ transhydrogenase (Si-specific) activity"/>
    <property type="evidence" value="ECO:0007669"/>
    <property type="project" value="UniProtKB-UniRule"/>
</dbReference>
<dbReference type="GO" id="GO:0006103">
    <property type="term" value="P:2-oxoglutarate metabolic process"/>
    <property type="evidence" value="ECO:0007669"/>
    <property type="project" value="TreeGrafter"/>
</dbReference>
<dbReference type="GO" id="GO:0006739">
    <property type="term" value="P:NADP metabolic process"/>
    <property type="evidence" value="ECO:0007669"/>
    <property type="project" value="UniProtKB-UniRule"/>
</dbReference>
<dbReference type="FunFam" id="3.30.390.30:FF:000002">
    <property type="entry name" value="Soluble pyridine nucleotide transhydrogenase"/>
    <property type="match status" value="1"/>
</dbReference>
<dbReference type="FunFam" id="3.50.50.60:FF:000008">
    <property type="entry name" value="Soluble pyridine nucleotide transhydrogenase"/>
    <property type="match status" value="1"/>
</dbReference>
<dbReference type="Gene3D" id="3.30.390.30">
    <property type="match status" value="1"/>
</dbReference>
<dbReference type="Gene3D" id="3.50.50.60">
    <property type="entry name" value="FAD/NAD(P)-binding domain"/>
    <property type="match status" value="2"/>
</dbReference>
<dbReference type="HAMAP" id="MF_00247">
    <property type="entry name" value="SthA"/>
    <property type="match status" value="1"/>
</dbReference>
<dbReference type="InterPro" id="IPR050151">
    <property type="entry name" value="Class-I_Pyr_Nuc-Dis_Oxidored"/>
</dbReference>
<dbReference type="InterPro" id="IPR036188">
    <property type="entry name" value="FAD/NAD-bd_sf"/>
</dbReference>
<dbReference type="InterPro" id="IPR023753">
    <property type="entry name" value="FAD/NAD-binding_dom"/>
</dbReference>
<dbReference type="InterPro" id="IPR016156">
    <property type="entry name" value="FAD/NAD-linked_Rdtase_dimer_sf"/>
</dbReference>
<dbReference type="InterPro" id="IPR001100">
    <property type="entry name" value="Pyr_nuc-diS_OxRdtase"/>
</dbReference>
<dbReference type="InterPro" id="IPR004099">
    <property type="entry name" value="Pyr_nucl-diS_OxRdtase_dimer"/>
</dbReference>
<dbReference type="InterPro" id="IPR022962">
    <property type="entry name" value="STH_gammaproteobact"/>
</dbReference>
<dbReference type="NCBIfam" id="NF003585">
    <property type="entry name" value="PRK05249.1"/>
    <property type="match status" value="1"/>
</dbReference>
<dbReference type="PANTHER" id="PTHR22912">
    <property type="entry name" value="DISULFIDE OXIDOREDUCTASE"/>
    <property type="match status" value="1"/>
</dbReference>
<dbReference type="PANTHER" id="PTHR22912:SF93">
    <property type="entry name" value="SOLUBLE PYRIDINE NUCLEOTIDE TRANSHYDROGENASE"/>
    <property type="match status" value="1"/>
</dbReference>
<dbReference type="Pfam" id="PF07992">
    <property type="entry name" value="Pyr_redox_2"/>
    <property type="match status" value="1"/>
</dbReference>
<dbReference type="Pfam" id="PF02852">
    <property type="entry name" value="Pyr_redox_dim"/>
    <property type="match status" value="1"/>
</dbReference>
<dbReference type="PIRSF" id="PIRSF000350">
    <property type="entry name" value="Mercury_reductase_MerA"/>
    <property type="match status" value="1"/>
</dbReference>
<dbReference type="PRINTS" id="PR00368">
    <property type="entry name" value="FADPNR"/>
</dbReference>
<dbReference type="PRINTS" id="PR00411">
    <property type="entry name" value="PNDRDTASEI"/>
</dbReference>
<dbReference type="SUPFAM" id="SSF51905">
    <property type="entry name" value="FAD/NAD(P)-binding domain"/>
    <property type="match status" value="1"/>
</dbReference>
<dbReference type="SUPFAM" id="SSF55424">
    <property type="entry name" value="FAD/NAD-linked reductases, dimerisation (C-terminal) domain"/>
    <property type="match status" value="1"/>
</dbReference>
<proteinExistence type="inferred from homology"/>
<keyword id="KW-0963">Cytoplasm</keyword>
<keyword id="KW-0274">FAD</keyword>
<keyword id="KW-0285">Flavoprotein</keyword>
<keyword id="KW-0520">NAD</keyword>
<keyword id="KW-0521">NADP</keyword>
<keyword id="KW-0560">Oxidoreductase</keyword>
<accession>A6V3A6</accession>
<feature type="chain" id="PRO_1000012561" description="Soluble pyridine nucleotide transhydrogenase">
    <location>
        <begin position="1"/>
        <end position="464"/>
    </location>
</feature>
<feature type="binding site" evidence="1">
    <location>
        <begin position="35"/>
        <end position="44"/>
    </location>
    <ligand>
        <name>FAD</name>
        <dbReference type="ChEBI" id="CHEBI:57692"/>
    </ligand>
</feature>
<organism>
    <name type="scientific">Pseudomonas paraeruginosa (strain DSM 24068 / PA7)</name>
    <name type="common">Pseudomonas aeruginosa (strain PA7)</name>
    <dbReference type="NCBI Taxonomy" id="381754"/>
    <lineage>
        <taxon>Bacteria</taxon>
        <taxon>Pseudomonadati</taxon>
        <taxon>Pseudomonadota</taxon>
        <taxon>Gammaproteobacteria</taxon>
        <taxon>Pseudomonadales</taxon>
        <taxon>Pseudomonadaceae</taxon>
        <taxon>Pseudomonas</taxon>
        <taxon>Pseudomonas paraeruginosa</taxon>
    </lineage>
</organism>
<name>STHA_PSEP7</name>
<evidence type="ECO:0000255" key="1">
    <source>
        <dbReference type="HAMAP-Rule" id="MF_00247"/>
    </source>
</evidence>
<comment type="function">
    <text evidence="1">Conversion of NADPH, generated by peripheral catabolic pathways, to NADH, which can enter the respiratory chain for energy generation.</text>
</comment>
<comment type="catalytic activity">
    <reaction evidence="1">
        <text>NAD(+) + NADPH = NADH + NADP(+)</text>
        <dbReference type="Rhea" id="RHEA:11692"/>
        <dbReference type="ChEBI" id="CHEBI:57540"/>
        <dbReference type="ChEBI" id="CHEBI:57783"/>
        <dbReference type="ChEBI" id="CHEBI:57945"/>
        <dbReference type="ChEBI" id="CHEBI:58349"/>
        <dbReference type="EC" id="1.6.1.1"/>
    </reaction>
</comment>
<comment type="cofactor">
    <cofactor evidence="1">
        <name>FAD</name>
        <dbReference type="ChEBI" id="CHEBI:57692"/>
    </cofactor>
    <text evidence="1">Binds 1 FAD per subunit.</text>
</comment>
<comment type="subcellular location">
    <subcellularLocation>
        <location evidence="1">Cytoplasm</location>
    </subcellularLocation>
</comment>
<comment type="similarity">
    <text evidence="1">Belongs to the class-I pyridine nucleotide-disulfide oxidoreductase family.</text>
</comment>
<protein>
    <recommendedName>
        <fullName evidence="1">Soluble pyridine nucleotide transhydrogenase</fullName>
        <shortName evidence="1">STH</shortName>
        <ecNumber evidence="1">1.6.1.1</ecNumber>
    </recommendedName>
    <alternativeName>
        <fullName evidence="1">NAD(P)(+) transhydrogenase [B-specific]</fullName>
    </alternativeName>
</protein>
<gene>
    <name evidence="1" type="primary">sthA</name>
    <name type="ordered locus">PSPA7_2169</name>
</gene>
<sequence length="464" mass="51147">MAVYNYDVVILGTGPAGEGAAMNASKYGRKLAVVDSRRVVGGNCTHLGTIPSKALRHSVKQIIEFNTNPMFRQIGEPRWFSFPDVLKSADRVISKQVASRTGYYARNRIDMFTGTASFVDERTVEVVTPSGAVERLVADQFVIATGSRPYRPSDINFNHPRVYDSDTILSLSHTPRRLIIYGAGVIGCEYASIFSGLGVLVDLIDTRDQLLSFLDDEISDALSYHLRNNNVLIRHNEEYERVEGLDNGVILHLKSGKKIKADALLWCNGRTGNTDKLGLENVGIKVNSRGQVEVDENYRTSVSNIFAAGDVIGWPSLASAAYDQGRSAAGNIVESDSWRFVNDVPTGIYTIPEISSIGKNESELTAAKIPYEVGKAFFKGMARAQISNEPVGMLKILFHRETLEILGVHCFGDQASEIVHIGQAIMNQPGELNTLKYFVNTTFNYPTMAEAYRVAAFDGLNRLF</sequence>
<reference key="1">
    <citation type="submission" date="2007-06" db="EMBL/GenBank/DDBJ databases">
        <authorList>
            <person name="Dodson R.J."/>
            <person name="Harkins D."/>
            <person name="Paulsen I.T."/>
        </authorList>
    </citation>
    <scope>NUCLEOTIDE SEQUENCE [LARGE SCALE GENOMIC DNA]</scope>
    <source>
        <strain>DSM 24068 / PA7</strain>
    </source>
</reference>